<proteinExistence type="inferred from homology"/>
<sequence>MSEYRVNHEPVFMLASSPWRESSLWVEAFSRRYGRVALLARSARKRQSELRGVLVPFVPVSVSWYGSQELKTLHRAEWVGGWRQPQGRALFGGLYVNELVLKLTAREDPVPELYDALAEVMEAVCCKAAYIDDLRRFEWRLLNLLGVAPDLNRDGDGGTIAAGGTYLVRPETAVFPVGKGFAVPPHAAGVVAPGQSLIDLREGSFRTAESLQQALKITRLFIRHLLPEGLKSRQVLEQIRQFDRKETARETVPTSDGTASNAV</sequence>
<feature type="chain" id="PRO_0000204975" description="DNA repair protein RecO">
    <location>
        <begin position="1"/>
        <end position="263"/>
    </location>
</feature>
<feature type="region of interest" description="Disordered" evidence="2">
    <location>
        <begin position="243"/>
        <end position="263"/>
    </location>
</feature>
<feature type="compositionally biased region" description="Polar residues" evidence="2">
    <location>
        <begin position="252"/>
        <end position="263"/>
    </location>
</feature>
<accession>Q9K0W0</accession>
<protein>
    <recommendedName>
        <fullName>DNA repair protein RecO</fullName>
    </recommendedName>
    <alternativeName>
        <fullName>Recombination protein O</fullName>
    </alternativeName>
</protein>
<keyword id="KW-0227">DNA damage</keyword>
<keyword id="KW-0233">DNA recombination</keyword>
<keyword id="KW-0234">DNA repair</keyword>
<keyword id="KW-1185">Reference proteome</keyword>
<comment type="function">
    <text evidence="1">Involved in DNA repair and RecF pathway recombination. Involved in pilin antigenic variation (By similarity).</text>
</comment>
<comment type="similarity">
    <text evidence="3">Belongs to the RecO family.</text>
</comment>
<evidence type="ECO:0000250" key="1"/>
<evidence type="ECO:0000256" key="2">
    <source>
        <dbReference type="SAM" id="MobiDB-lite"/>
    </source>
</evidence>
<evidence type="ECO:0000305" key="3"/>
<name>RECO_NEIMB</name>
<reference key="1">
    <citation type="journal article" date="2000" name="Science">
        <title>Complete genome sequence of Neisseria meningitidis serogroup B strain MC58.</title>
        <authorList>
            <person name="Tettelin H."/>
            <person name="Saunders N.J."/>
            <person name="Heidelberg J.F."/>
            <person name="Jeffries A.C."/>
            <person name="Nelson K.E."/>
            <person name="Eisen J.A."/>
            <person name="Ketchum K.A."/>
            <person name="Hood D.W."/>
            <person name="Peden J.F."/>
            <person name="Dodson R.J."/>
            <person name="Nelson W.C."/>
            <person name="Gwinn M.L."/>
            <person name="DeBoy R.T."/>
            <person name="Peterson J.D."/>
            <person name="Hickey E.K."/>
            <person name="Haft D.H."/>
            <person name="Salzberg S.L."/>
            <person name="White O."/>
            <person name="Fleischmann R.D."/>
            <person name="Dougherty B.A."/>
            <person name="Mason T.M."/>
            <person name="Ciecko A."/>
            <person name="Parksey D.S."/>
            <person name="Blair E."/>
            <person name="Cittone H."/>
            <person name="Clark E.B."/>
            <person name="Cotton M.D."/>
            <person name="Utterback T.R."/>
            <person name="Khouri H.M."/>
            <person name="Qin H."/>
            <person name="Vamathevan J.J."/>
            <person name="Gill J."/>
            <person name="Scarlato V."/>
            <person name="Masignani V."/>
            <person name="Pizza M."/>
            <person name="Grandi G."/>
            <person name="Sun L."/>
            <person name="Smith H.O."/>
            <person name="Fraser C.M."/>
            <person name="Moxon E.R."/>
            <person name="Rappuoli R."/>
            <person name="Venter J.C."/>
        </authorList>
    </citation>
    <scope>NUCLEOTIDE SEQUENCE [LARGE SCALE GENOMIC DNA]</scope>
    <source>
        <strain>ATCC BAA-335 / MC58</strain>
    </source>
</reference>
<dbReference type="EMBL" id="AE002098">
    <property type="protein sequence ID" value="AAF40884.1"/>
    <property type="molecule type" value="Genomic_DNA"/>
</dbReference>
<dbReference type="PIR" id="A81197">
    <property type="entry name" value="A81197"/>
</dbReference>
<dbReference type="RefSeq" id="NP_273494.1">
    <property type="nucleotide sequence ID" value="NC_003112.2"/>
</dbReference>
<dbReference type="RefSeq" id="WP_002224936.1">
    <property type="nucleotide sequence ID" value="NC_003112.2"/>
</dbReference>
<dbReference type="SMR" id="Q9K0W0"/>
<dbReference type="FunCoup" id="Q9K0W0">
    <property type="interactions" value="58"/>
</dbReference>
<dbReference type="STRING" id="122586.NMB0447"/>
<dbReference type="PaxDb" id="122586-NMB0447"/>
<dbReference type="KEGG" id="nme:NMB0447"/>
<dbReference type="PATRIC" id="fig|122586.8.peg.569"/>
<dbReference type="HOGENOM" id="CLU_066645_0_1_4"/>
<dbReference type="InParanoid" id="Q9K0W0"/>
<dbReference type="OrthoDB" id="9804792at2"/>
<dbReference type="Proteomes" id="UP000000425">
    <property type="component" value="Chromosome"/>
</dbReference>
<dbReference type="GO" id="GO:0043590">
    <property type="term" value="C:bacterial nucleoid"/>
    <property type="evidence" value="ECO:0000318"/>
    <property type="project" value="GO_Central"/>
</dbReference>
<dbReference type="GO" id="GO:0006310">
    <property type="term" value="P:DNA recombination"/>
    <property type="evidence" value="ECO:0007669"/>
    <property type="project" value="UniProtKB-UniRule"/>
</dbReference>
<dbReference type="GO" id="GO:0006302">
    <property type="term" value="P:double-strand break repair"/>
    <property type="evidence" value="ECO:0000318"/>
    <property type="project" value="GO_Central"/>
</dbReference>
<dbReference type="Gene3D" id="2.40.50.140">
    <property type="entry name" value="Nucleic acid-binding proteins"/>
    <property type="match status" value="1"/>
</dbReference>
<dbReference type="Gene3D" id="1.20.1440.120">
    <property type="entry name" value="Recombination protein O, C-terminal domain"/>
    <property type="match status" value="1"/>
</dbReference>
<dbReference type="HAMAP" id="MF_00201">
    <property type="entry name" value="RecO"/>
    <property type="match status" value="1"/>
</dbReference>
<dbReference type="InterPro" id="IPR037278">
    <property type="entry name" value="ARFGAP/RecO"/>
</dbReference>
<dbReference type="InterPro" id="IPR022572">
    <property type="entry name" value="DNA_rep/recomb_RecO_N"/>
</dbReference>
<dbReference type="InterPro" id="IPR012340">
    <property type="entry name" value="NA-bd_OB-fold"/>
</dbReference>
<dbReference type="InterPro" id="IPR003717">
    <property type="entry name" value="RecO"/>
</dbReference>
<dbReference type="InterPro" id="IPR042242">
    <property type="entry name" value="RecO_C"/>
</dbReference>
<dbReference type="NCBIfam" id="TIGR00613">
    <property type="entry name" value="reco"/>
    <property type="match status" value="1"/>
</dbReference>
<dbReference type="PANTHER" id="PTHR33991">
    <property type="entry name" value="DNA REPAIR PROTEIN RECO"/>
    <property type="match status" value="1"/>
</dbReference>
<dbReference type="PANTHER" id="PTHR33991:SF1">
    <property type="entry name" value="DNA REPAIR PROTEIN RECO"/>
    <property type="match status" value="1"/>
</dbReference>
<dbReference type="Pfam" id="PF02565">
    <property type="entry name" value="RecO_C"/>
    <property type="match status" value="1"/>
</dbReference>
<dbReference type="Pfam" id="PF11967">
    <property type="entry name" value="RecO_N"/>
    <property type="match status" value="1"/>
</dbReference>
<dbReference type="SUPFAM" id="SSF57863">
    <property type="entry name" value="ArfGap/RecO-like zinc finger"/>
    <property type="match status" value="1"/>
</dbReference>
<dbReference type="SUPFAM" id="SSF50249">
    <property type="entry name" value="Nucleic acid-binding proteins"/>
    <property type="match status" value="1"/>
</dbReference>
<gene>
    <name type="primary">recO</name>
    <name type="ordered locus">NMB0447</name>
</gene>
<organism>
    <name type="scientific">Neisseria meningitidis serogroup B (strain ATCC BAA-335 / MC58)</name>
    <dbReference type="NCBI Taxonomy" id="122586"/>
    <lineage>
        <taxon>Bacteria</taxon>
        <taxon>Pseudomonadati</taxon>
        <taxon>Pseudomonadota</taxon>
        <taxon>Betaproteobacteria</taxon>
        <taxon>Neisseriales</taxon>
        <taxon>Neisseriaceae</taxon>
        <taxon>Neisseria</taxon>
    </lineage>
</organism>